<comment type="function">
    <text evidence="1">Synthesizes alpha-1,4-glucan chains using ADP-glucose.</text>
</comment>
<comment type="catalytic activity">
    <reaction evidence="1">
        <text>[(1-&gt;4)-alpha-D-glucosyl](n) + ADP-alpha-D-glucose = [(1-&gt;4)-alpha-D-glucosyl](n+1) + ADP + H(+)</text>
        <dbReference type="Rhea" id="RHEA:18189"/>
        <dbReference type="Rhea" id="RHEA-COMP:9584"/>
        <dbReference type="Rhea" id="RHEA-COMP:9587"/>
        <dbReference type="ChEBI" id="CHEBI:15378"/>
        <dbReference type="ChEBI" id="CHEBI:15444"/>
        <dbReference type="ChEBI" id="CHEBI:57498"/>
        <dbReference type="ChEBI" id="CHEBI:456216"/>
        <dbReference type="EC" id="2.4.1.21"/>
    </reaction>
</comment>
<comment type="pathway">
    <text evidence="1">Glycan biosynthesis; glycogen biosynthesis.</text>
</comment>
<comment type="similarity">
    <text evidence="1">Belongs to the glycosyltransferase 1 family. Bacterial/plant glycogen synthase subfamily.</text>
</comment>
<comment type="sequence caution" evidence="2">
    <conflict type="erroneous initiation">
        <sequence resource="EMBL-CDS" id="AAF10170"/>
    </conflict>
</comment>
<gene>
    <name evidence="1" type="primary">glgA</name>
    <name type="ordered locus">DR_0594</name>
</gene>
<name>GLGA_DEIRA</name>
<keyword id="KW-0320">Glycogen biosynthesis</keyword>
<keyword id="KW-0328">Glycosyltransferase</keyword>
<keyword id="KW-1185">Reference proteome</keyword>
<keyword id="KW-0808">Transferase</keyword>
<reference key="1">
    <citation type="journal article" date="1999" name="Science">
        <title>Genome sequence of the radioresistant bacterium Deinococcus radiodurans R1.</title>
        <authorList>
            <person name="White O."/>
            <person name="Eisen J.A."/>
            <person name="Heidelberg J.F."/>
            <person name="Hickey E.K."/>
            <person name="Peterson J.D."/>
            <person name="Dodson R.J."/>
            <person name="Haft D.H."/>
            <person name="Gwinn M.L."/>
            <person name="Nelson W.C."/>
            <person name="Richardson D.L."/>
            <person name="Moffat K.S."/>
            <person name="Qin H."/>
            <person name="Jiang L."/>
            <person name="Pamphile W."/>
            <person name="Crosby M."/>
            <person name="Shen M."/>
            <person name="Vamathevan J.J."/>
            <person name="Lam P."/>
            <person name="McDonald L.A."/>
            <person name="Utterback T.R."/>
            <person name="Zalewski C."/>
            <person name="Makarova K.S."/>
            <person name="Aravind L."/>
            <person name="Daly M.J."/>
            <person name="Minton K.W."/>
            <person name="Fleischmann R.D."/>
            <person name="Ketchum K.A."/>
            <person name="Nelson K.E."/>
            <person name="Salzberg S.L."/>
            <person name="Smith H.O."/>
            <person name="Venter J.C."/>
            <person name="Fraser C.M."/>
        </authorList>
    </citation>
    <scope>NUCLEOTIDE SEQUENCE [LARGE SCALE GENOMIC DNA]</scope>
    <source>
        <strain>ATCC 13939 / DSM 20539 / JCM 16871 / CCUG 27074 / LMG 4051 / NBRC 15346 / NCIMB 9279 / VKM B-1422 / R1</strain>
    </source>
</reference>
<sequence length="444" mass="48458">MRVLHLASEVFPFSRSGGLGDVLGALPAVQARLGEDAEVTVLSPWYASLQGEPQELWRGEAWGEQAWLGELRQDGVRYLFLGLNEFQRPGLYHPDDVERFCAFGRAALPALDAVGVTPDVLHGHDWQAGLVVAHARLRGLRTAFSVHNLQYQGRWNLHEAAGWTGLPDWTFGPDGVEFFGDLNLMKAGLNFAGHVTTVSPTYAQEITTPQYGEGLEGLLVRLTHEGRLSGILNGLDQDRWNPRTDPDIAAYSDPAGKAGAVKALRQEFGLDDAPILATVSRLADQKGMDLLITALPELVRDWNVVVLGGGDPLLEAALTGWANHPRVAFASGMNEPLAHRIYAGAHAFAMPSRFEPCGLSQLIAMRYGTLPIVRETGGLADTVPPEVGFRFADATAPAFLQACREAQAAFQDPAQWQTRATRAMSLDFSWDGPARQYLELYRGL</sequence>
<dbReference type="EC" id="2.4.1.21" evidence="1"/>
<dbReference type="EMBL" id="AE000513">
    <property type="protein sequence ID" value="AAF10170.1"/>
    <property type="status" value="ALT_INIT"/>
    <property type="molecule type" value="Genomic_DNA"/>
</dbReference>
<dbReference type="PIR" id="B75501">
    <property type="entry name" value="B75501"/>
</dbReference>
<dbReference type="RefSeq" id="NP_294317.1">
    <property type="nucleotide sequence ID" value="NC_001263.1"/>
</dbReference>
<dbReference type="RefSeq" id="WP_027479518.1">
    <property type="nucleotide sequence ID" value="NC_001263.1"/>
</dbReference>
<dbReference type="SMR" id="Q9RWS1"/>
<dbReference type="FunCoup" id="Q9RWS1">
    <property type="interactions" value="79"/>
</dbReference>
<dbReference type="STRING" id="243230.DR_0594"/>
<dbReference type="CAZy" id="GT5">
    <property type="family name" value="Glycosyltransferase Family 5"/>
</dbReference>
<dbReference type="PaxDb" id="243230-DR_0594"/>
<dbReference type="EnsemblBacteria" id="AAF10170">
    <property type="protein sequence ID" value="AAF10170"/>
    <property type="gene ID" value="DR_0594"/>
</dbReference>
<dbReference type="GeneID" id="69516837"/>
<dbReference type="KEGG" id="dra:DR_0594"/>
<dbReference type="PATRIC" id="fig|243230.17.peg.772"/>
<dbReference type="eggNOG" id="COG0297">
    <property type="taxonomic scope" value="Bacteria"/>
</dbReference>
<dbReference type="HOGENOM" id="CLU_009583_18_2_0"/>
<dbReference type="InParanoid" id="Q9RWS1"/>
<dbReference type="OrthoDB" id="9808590at2"/>
<dbReference type="UniPathway" id="UPA00164"/>
<dbReference type="Proteomes" id="UP000002524">
    <property type="component" value="Chromosome 1"/>
</dbReference>
<dbReference type="GO" id="GO:0009011">
    <property type="term" value="F:alpha-1,4-glucan glucosyltransferase (ADP-glucose donor) activity"/>
    <property type="evidence" value="ECO:0007669"/>
    <property type="project" value="UniProtKB-UniRule"/>
</dbReference>
<dbReference type="GO" id="GO:0004373">
    <property type="term" value="F:alpha-1,4-glucan glucosyltransferase (UDP-glucose donor) activity"/>
    <property type="evidence" value="ECO:0007669"/>
    <property type="project" value="InterPro"/>
</dbReference>
<dbReference type="GO" id="GO:0005978">
    <property type="term" value="P:glycogen biosynthetic process"/>
    <property type="evidence" value="ECO:0007669"/>
    <property type="project" value="UniProtKB-UniRule"/>
</dbReference>
<dbReference type="CDD" id="cd03791">
    <property type="entry name" value="GT5_Glycogen_synthase_DULL1-like"/>
    <property type="match status" value="1"/>
</dbReference>
<dbReference type="Gene3D" id="3.40.50.2000">
    <property type="entry name" value="Glycogen Phosphorylase B"/>
    <property type="match status" value="2"/>
</dbReference>
<dbReference type="HAMAP" id="MF_00484">
    <property type="entry name" value="Glycogen_synth"/>
    <property type="match status" value="1"/>
</dbReference>
<dbReference type="InterPro" id="IPR011835">
    <property type="entry name" value="GS/SS"/>
</dbReference>
<dbReference type="InterPro" id="IPR013534">
    <property type="entry name" value="Starch_synth_cat_dom"/>
</dbReference>
<dbReference type="NCBIfam" id="TIGR02095">
    <property type="entry name" value="glgA"/>
    <property type="match status" value="1"/>
</dbReference>
<dbReference type="PANTHER" id="PTHR45825:SF11">
    <property type="entry name" value="ALPHA AMYLASE DOMAIN-CONTAINING PROTEIN"/>
    <property type="match status" value="1"/>
</dbReference>
<dbReference type="PANTHER" id="PTHR45825">
    <property type="entry name" value="GRANULE-BOUND STARCH SYNTHASE 1, CHLOROPLASTIC/AMYLOPLASTIC"/>
    <property type="match status" value="1"/>
</dbReference>
<dbReference type="Pfam" id="PF13692">
    <property type="entry name" value="Glyco_trans_1_4"/>
    <property type="match status" value="1"/>
</dbReference>
<dbReference type="Pfam" id="PF08323">
    <property type="entry name" value="Glyco_transf_5"/>
    <property type="match status" value="1"/>
</dbReference>
<dbReference type="SUPFAM" id="SSF53756">
    <property type="entry name" value="UDP-Glycosyltransferase/glycogen phosphorylase"/>
    <property type="match status" value="1"/>
</dbReference>
<proteinExistence type="inferred from homology"/>
<protein>
    <recommendedName>
        <fullName evidence="1">Glycogen synthase</fullName>
        <ecNumber evidence="1">2.4.1.21</ecNumber>
    </recommendedName>
    <alternativeName>
        <fullName evidence="1">Starch [bacterial glycogen] synthase</fullName>
    </alternativeName>
</protein>
<evidence type="ECO:0000255" key="1">
    <source>
        <dbReference type="HAMAP-Rule" id="MF_00484"/>
    </source>
</evidence>
<evidence type="ECO:0000305" key="2"/>
<accession>Q9RWS1</accession>
<feature type="chain" id="PRO_0000188609" description="Glycogen synthase">
    <location>
        <begin position="1"/>
        <end position="444"/>
    </location>
</feature>
<feature type="binding site" evidence="1">
    <location>
        <position position="15"/>
    </location>
    <ligand>
        <name>ADP-alpha-D-glucose</name>
        <dbReference type="ChEBI" id="CHEBI:57498"/>
    </ligand>
</feature>
<organism>
    <name type="scientific">Deinococcus radiodurans (strain ATCC 13939 / DSM 20539 / JCM 16871 / CCUG 27074 / LMG 4051 / NBRC 15346 / NCIMB 9279 / VKM B-1422 / R1)</name>
    <dbReference type="NCBI Taxonomy" id="243230"/>
    <lineage>
        <taxon>Bacteria</taxon>
        <taxon>Thermotogati</taxon>
        <taxon>Deinococcota</taxon>
        <taxon>Deinococci</taxon>
        <taxon>Deinococcales</taxon>
        <taxon>Deinococcaceae</taxon>
        <taxon>Deinococcus</taxon>
    </lineage>
</organism>